<accession>P77743</accession>
<accession>Q2MC93</accession>
<comment type="function">
    <text>Involved in the transcriptional regulation of the propionate catabolism operon.</text>
</comment>
<evidence type="ECO:0000250" key="1"/>
<evidence type="ECO:0000255" key="2">
    <source>
        <dbReference type="PROSITE-ProRule" id="PRU00193"/>
    </source>
</evidence>
<evidence type="ECO:0007829" key="3">
    <source>
        <dbReference type="PDB" id="2PJU"/>
    </source>
</evidence>
<reference key="1">
    <citation type="submission" date="1997-01" db="EMBL/GenBank/DDBJ databases">
        <title>Sequence of minutes 4-25 of Escherichia coli.</title>
        <authorList>
            <person name="Chung E."/>
            <person name="Allen E."/>
            <person name="Araujo R."/>
            <person name="Aparicio A.M."/>
            <person name="Davis K."/>
            <person name="Duncan M."/>
            <person name="Federspiel N."/>
            <person name="Hyman R."/>
            <person name="Kalman S."/>
            <person name="Komp C."/>
            <person name="Kurdi O."/>
            <person name="Lew H."/>
            <person name="Lin D."/>
            <person name="Namath A."/>
            <person name="Oefner P."/>
            <person name="Roberts D."/>
            <person name="Schramm S."/>
            <person name="Davis R.W."/>
        </authorList>
    </citation>
    <scope>NUCLEOTIDE SEQUENCE [LARGE SCALE GENOMIC DNA]</scope>
    <source>
        <strain>K12 / MG1655 / ATCC 47076</strain>
    </source>
</reference>
<reference key="2">
    <citation type="journal article" date="1997" name="Science">
        <title>The complete genome sequence of Escherichia coli K-12.</title>
        <authorList>
            <person name="Blattner F.R."/>
            <person name="Plunkett G. III"/>
            <person name="Bloch C.A."/>
            <person name="Perna N.T."/>
            <person name="Burland V."/>
            <person name="Riley M."/>
            <person name="Collado-Vides J."/>
            <person name="Glasner J.D."/>
            <person name="Rode C.K."/>
            <person name="Mayhew G.F."/>
            <person name="Gregor J."/>
            <person name="Davis N.W."/>
            <person name="Kirkpatrick H.A."/>
            <person name="Goeden M.A."/>
            <person name="Rose D.J."/>
            <person name="Mau B."/>
            <person name="Shao Y."/>
        </authorList>
    </citation>
    <scope>NUCLEOTIDE SEQUENCE [LARGE SCALE GENOMIC DNA]</scope>
    <source>
        <strain>K12 / MG1655 / ATCC 47076</strain>
    </source>
</reference>
<reference key="3">
    <citation type="journal article" date="2006" name="Mol. Syst. Biol.">
        <title>Highly accurate genome sequences of Escherichia coli K-12 strains MG1655 and W3110.</title>
        <authorList>
            <person name="Hayashi K."/>
            <person name="Morooka N."/>
            <person name="Yamamoto Y."/>
            <person name="Fujita K."/>
            <person name="Isono K."/>
            <person name="Choi S."/>
            <person name="Ohtsubo E."/>
            <person name="Baba T."/>
            <person name="Wanner B.L."/>
            <person name="Mori H."/>
            <person name="Horiuchi T."/>
        </authorList>
    </citation>
    <scope>NUCLEOTIDE SEQUENCE [LARGE SCALE GENOMIC DNA]</scope>
    <source>
        <strain>K12 / W3110 / ATCC 27325 / DSM 5911</strain>
    </source>
</reference>
<keyword id="KW-0002">3D-structure</keyword>
<keyword id="KW-0067">ATP-binding</keyword>
<keyword id="KW-0238">DNA-binding</keyword>
<keyword id="KW-0547">Nucleotide-binding</keyword>
<keyword id="KW-1185">Reference proteome</keyword>
<keyword id="KW-0804">Transcription</keyword>
<keyword id="KW-0805">Transcription regulation</keyword>
<keyword id="KW-0902">Two-component regulatory system</keyword>
<protein>
    <recommendedName>
        <fullName>Propionate catabolism operon regulatory protein</fullName>
    </recommendedName>
</protein>
<name>PRPR_ECOLI</name>
<dbReference type="EMBL" id="U73857">
    <property type="protein sequence ID" value="AAB18054.1"/>
    <property type="molecule type" value="Genomic_DNA"/>
</dbReference>
<dbReference type="EMBL" id="U00096">
    <property type="protein sequence ID" value="AAC73433.1"/>
    <property type="molecule type" value="Genomic_DNA"/>
</dbReference>
<dbReference type="EMBL" id="AP009048">
    <property type="protein sequence ID" value="BAE76113.1"/>
    <property type="molecule type" value="Genomic_DNA"/>
</dbReference>
<dbReference type="PIR" id="B64760">
    <property type="entry name" value="B64760"/>
</dbReference>
<dbReference type="RefSeq" id="NP_414864.1">
    <property type="nucleotide sequence ID" value="NC_000913.3"/>
</dbReference>
<dbReference type="RefSeq" id="WP_000941041.1">
    <property type="nucleotide sequence ID" value="NZ_SSZK01000063.1"/>
</dbReference>
<dbReference type="PDB" id="2PJU">
    <property type="method" value="X-ray"/>
    <property type="resolution" value="2.10 A"/>
    <property type="chains" value="A/B/C/D=2-215"/>
</dbReference>
<dbReference type="PDBsum" id="2PJU"/>
<dbReference type="SMR" id="P77743"/>
<dbReference type="BioGRID" id="4259807">
    <property type="interactions" value="139"/>
</dbReference>
<dbReference type="DIP" id="DIP-10582N"/>
<dbReference type="FunCoup" id="P77743">
    <property type="interactions" value="176"/>
</dbReference>
<dbReference type="IntAct" id="P77743">
    <property type="interactions" value="1"/>
</dbReference>
<dbReference type="STRING" id="511145.b0330"/>
<dbReference type="jPOST" id="P77743"/>
<dbReference type="PaxDb" id="511145-b0330"/>
<dbReference type="EnsemblBacteria" id="AAC73433">
    <property type="protein sequence ID" value="AAC73433"/>
    <property type="gene ID" value="b0330"/>
</dbReference>
<dbReference type="GeneID" id="944987"/>
<dbReference type="KEGG" id="ecj:JW0322"/>
<dbReference type="KEGG" id="eco:b0330"/>
<dbReference type="KEGG" id="ecoc:C3026_01620"/>
<dbReference type="KEGG" id="ecoc:C3026_24790"/>
<dbReference type="PATRIC" id="fig|1411691.4.peg.1946"/>
<dbReference type="EchoBASE" id="EB3369"/>
<dbReference type="eggNOG" id="COG3829">
    <property type="taxonomic scope" value="Bacteria"/>
</dbReference>
<dbReference type="HOGENOM" id="CLU_000445_8_5_6"/>
<dbReference type="InParanoid" id="P77743"/>
<dbReference type="OMA" id="IMLYARS"/>
<dbReference type="OrthoDB" id="9804019at2"/>
<dbReference type="PhylomeDB" id="P77743"/>
<dbReference type="BioCyc" id="EcoCyc:G6195-MONOMER"/>
<dbReference type="EvolutionaryTrace" id="P77743"/>
<dbReference type="PRO" id="PR:P77743"/>
<dbReference type="Proteomes" id="UP000000625">
    <property type="component" value="Chromosome"/>
</dbReference>
<dbReference type="GO" id="GO:0005737">
    <property type="term" value="C:cytoplasm"/>
    <property type="evidence" value="ECO:0007669"/>
    <property type="project" value="InterPro"/>
</dbReference>
<dbReference type="GO" id="GO:0032993">
    <property type="term" value="C:protein-DNA complex"/>
    <property type="evidence" value="ECO:0000318"/>
    <property type="project" value="GO_Central"/>
</dbReference>
<dbReference type="GO" id="GO:0005524">
    <property type="term" value="F:ATP binding"/>
    <property type="evidence" value="ECO:0007669"/>
    <property type="project" value="UniProtKB-KW"/>
</dbReference>
<dbReference type="GO" id="GO:0016887">
    <property type="term" value="F:ATP hydrolysis activity"/>
    <property type="evidence" value="ECO:0007669"/>
    <property type="project" value="InterPro"/>
</dbReference>
<dbReference type="GO" id="GO:0000987">
    <property type="term" value="F:cis-regulatory region sequence-specific DNA binding"/>
    <property type="evidence" value="ECO:0000318"/>
    <property type="project" value="GO_Central"/>
</dbReference>
<dbReference type="GO" id="GO:0001216">
    <property type="term" value="F:DNA-binding transcription activator activity"/>
    <property type="evidence" value="ECO:0000318"/>
    <property type="project" value="GO_Central"/>
</dbReference>
<dbReference type="GO" id="GO:0003700">
    <property type="term" value="F:DNA-binding transcription factor activity"/>
    <property type="evidence" value="ECO:0000314"/>
    <property type="project" value="EcoCyc"/>
</dbReference>
<dbReference type="GO" id="GO:0000156">
    <property type="term" value="F:phosphorelay response regulator activity"/>
    <property type="evidence" value="ECO:0007669"/>
    <property type="project" value="InterPro"/>
</dbReference>
<dbReference type="GO" id="GO:0045892">
    <property type="term" value="P:negative regulation of DNA-templated transcription"/>
    <property type="evidence" value="ECO:0000314"/>
    <property type="project" value="EcoCyc"/>
</dbReference>
<dbReference type="GO" id="GO:0045893">
    <property type="term" value="P:positive regulation of DNA-templated transcription"/>
    <property type="evidence" value="ECO:0000314"/>
    <property type="project" value="EcoCyc"/>
</dbReference>
<dbReference type="GO" id="GO:0019629">
    <property type="term" value="P:propionate catabolic process, 2-methylcitrate cycle"/>
    <property type="evidence" value="ECO:0007669"/>
    <property type="project" value="InterPro"/>
</dbReference>
<dbReference type="GO" id="GO:0009314">
    <property type="term" value="P:response to radiation"/>
    <property type="evidence" value="ECO:0000315"/>
    <property type="project" value="EcoCyc"/>
</dbReference>
<dbReference type="CDD" id="cd00009">
    <property type="entry name" value="AAA"/>
    <property type="match status" value="1"/>
</dbReference>
<dbReference type="FunFam" id="3.40.50.300:FF:000006">
    <property type="entry name" value="DNA-binding transcriptional regulator NtrC"/>
    <property type="match status" value="1"/>
</dbReference>
<dbReference type="FunFam" id="1.10.8.60:FF:000118">
    <property type="entry name" value="Propionate catabolism operon regulatory protein PrpR"/>
    <property type="match status" value="1"/>
</dbReference>
<dbReference type="FunFam" id="3.40.50.2300:FF:000175">
    <property type="entry name" value="Propionate catabolism operon regulatory protein PrpR"/>
    <property type="match status" value="1"/>
</dbReference>
<dbReference type="Gene3D" id="1.10.8.60">
    <property type="match status" value="1"/>
</dbReference>
<dbReference type="Gene3D" id="1.20.5.170">
    <property type="match status" value="1"/>
</dbReference>
<dbReference type="Gene3D" id="3.40.50.2300">
    <property type="match status" value="1"/>
</dbReference>
<dbReference type="Gene3D" id="1.10.10.60">
    <property type="entry name" value="Homeodomain-like"/>
    <property type="match status" value="1"/>
</dbReference>
<dbReference type="Gene3D" id="3.40.50.300">
    <property type="entry name" value="P-loop containing nucleotide triphosphate hydrolases"/>
    <property type="match status" value="1"/>
</dbReference>
<dbReference type="InterPro" id="IPR003593">
    <property type="entry name" value="AAA+_ATPase"/>
</dbReference>
<dbReference type="InterPro" id="IPR009057">
    <property type="entry name" value="Homeodomain-like_sf"/>
</dbReference>
<dbReference type="InterPro" id="IPR002197">
    <property type="entry name" value="HTH_Fis"/>
</dbReference>
<dbReference type="InterPro" id="IPR027417">
    <property type="entry name" value="P-loop_NTPase"/>
</dbReference>
<dbReference type="InterPro" id="IPR012704">
    <property type="entry name" value="Sig_transdc_resp-reg_PrpR"/>
</dbReference>
<dbReference type="InterPro" id="IPR010524">
    <property type="entry name" value="Sig_transdc_resp-reg_PrpR_N"/>
</dbReference>
<dbReference type="InterPro" id="IPR002078">
    <property type="entry name" value="Sigma_54_int"/>
</dbReference>
<dbReference type="InterPro" id="IPR025943">
    <property type="entry name" value="Sigma_54_int_dom_ATP-bd_2"/>
</dbReference>
<dbReference type="InterPro" id="IPR025944">
    <property type="entry name" value="Sigma_54_int_dom_CS"/>
</dbReference>
<dbReference type="NCBIfam" id="NF011953">
    <property type="entry name" value="PRK15424.1"/>
    <property type="match status" value="1"/>
</dbReference>
<dbReference type="NCBIfam" id="TIGR02329">
    <property type="entry name" value="propionate_PrpR"/>
    <property type="match status" value="1"/>
</dbReference>
<dbReference type="PANTHER" id="PTHR32071:SF81">
    <property type="entry name" value="PROPIONATE CATABOLISM OPERON REGULATORY PROTEIN"/>
    <property type="match status" value="1"/>
</dbReference>
<dbReference type="PANTHER" id="PTHR32071">
    <property type="entry name" value="TRANSCRIPTIONAL REGULATORY PROTEIN"/>
    <property type="match status" value="1"/>
</dbReference>
<dbReference type="Pfam" id="PF02954">
    <property type="entry name" value="HTH_8"/>
    <property type="match status" value="1"/>
</dbReference>
<dbReference type="Pfam" id="PF06506">
    <property type="entry name" value="PrpR_N"/>
    <property type="match status" value="1"/>
</dbReference>
<dbReference type="Pfam" id="PF00158">
    <property type="entry name" value="Sigma54_activat"/>
    <property type="match status" value="1"/>
</dbReference>
<dbReference type="SMART" id="SM00382">
    <property type="entry name" value="AAA"/>
    <property type="match status" value="1"/>
</dbReference>
<dbReference type="SUPFAM" id="SSF46689">
    <property type="entry name" value="Homeodomain-like"/>
    <property type="match status" value="1"/>
</dbReference>
<dbReference type="SUPFAM" id="SSF52540">
    <property type="entry name" value="P-loop containing nucleoside triphosphate hydrolases"/>
    <property type="match status" value="1"/>
</dbReference>
<dbReference type="SUPFAM" id="SSF159800">
    <property type="entry name" value="PrpR receptor domain-like"/>
    <property type="match status" value="1"/>
</dbReference>
<dbReference type="PROSITE" id="PS00676">
    <property type="entry name" value="SIGMA54_INTERACT_2"/>
    <property type="match status" value="1"/>
</dbReference>
<dbReference type="PROSITE" id="PS00688">
    <property type="entry name" value="SIGMA54_INTERACT_3"/>
    <property type="match status" value="1"/>
</dbReference>
<dbReference type="PROSITE" id="PS50045">
    <property type="entry name" value="SIGMA54_INTERACT_4"/>
    <property type="match status" value="1"/>
</dbReference>
<proteinExistence type="evidence at protein level"/>
<organism>
    <name type="scientific">Escherichia coli (strain K12)</name>
    <dbReference type="NCBI Taxonomy" id="83333"/>
    <lineage>
        <taxon>Bacteria</taxon>
        <taxon>Pseudomonadati</taxon>
        <taxon>Pseudomonadota</taxon>
        <taxon>Gammaproteobacteria</taxon>
        <taxon>Enterobacterales</taxon>
        <taxon>Enterobacteriaceae</taxon>
        <taxon>Escherichia</taxon>
    </lineage>
</organism>
<feature type="chain" id="PRO_0000081324" description="Propionate catabolism operon regulatory protein">
    <location>
        <begin position="1"/>
        <end position="528"/>
    </location>
</feature>
<feature type="domain" description="Sigma-54 factor interaction" evidence="2">
    <location>
        <begin position="218"/>
        <end position="461"/>
    </location>
</feature>
<feature type="DNA-binding region" description="H-T-H motif" evidence="1">
    <location>
        <begin position="508"/>
        <end position="527"/>
    </location>
</feature>
<feature type="binding site" evidence="2">
    <location>
        <begin position="318"/>
        <end position="327"/>
    </location>
    <ligand>
        <name>ATP</name>
        <dbReference type="ChEBI" id="CHEBI:30616"/>
    </ligand>
</feature>
<feature type="strand" evidence="3">
    <location>
        <begin position="13"/>
        <end position="17"/>
    </location>
</feature>
<feature type="helix" evidence="3">
    <location>
        <begin position="20"/>
        <end position="30"/>
    </location>
</feature>
<feature type="turn" evidence="3">
    <location>
        <begin position="31"/>
        <end position="36"/>
    </location>
</feature>
<feature type="strand" evidence="3">
    <location>
        <begin position="38"/>
        <end position="42"/>
    </location>
</feature>
<feature type="helix" evidence="3">
    <location>
        <begin position="46"/>
        <end position="56"/>
    </location>
</feature>
<feature type="turn" evidence="3">
    <location>
        <begin position="57"/>
        <end position="59"/>
    </location>
</feature>
<feature type="strand" evidence="3">
    <location>
        <begin position="63"/>
        <end position="68"/>
    </location>
</feature>
<feature type="helix" evidence="3">
    <location>
        <begin position="69"/>
        <end position="76"/>
    </location>
</feature>
<feature type="strand" evidence="3">
    <location>
        <begin position="83"/>
        <end position="86"/>
    </location>
</feature>
<feature type="helix" evidence="3">
    <location>
        <begin position="90"/>
        <end position="99"/>
    </location>
</feature>
<feature type="strand" evidence="3">
    <location>
        <begin position="107"/>
        <end position="114"/>
    </location>
</feature>
<feature type="helix" evidence="3">
    <location>
        <begin position="117"/>
        <end position="126"/>
    </location>
</feature>
<feature type="strand" evidence="3">
    <location>
        <begin position="130"/>
        <end position="137"/>
    </location>
</feature>
<feature type="helix" evidence="3">
    <location>
        <begin position="138"/>
        <end position="150"/>
    </location>
</feature>
<feature type="strand" evidence="3">
    <location>
        <begin position="155"/>
        <end position="159"/>
    </location>
</feature>
<feature type="helix" evidence="3">
    <location>
        <begin position="160"/>
        <end position="168"/>
    </location>
</feature>
<feature type="strand" evidence="3">
    <location>
        <begin position="171"/>
        <end position="177"/>
    </location>
</feature>
<feature type="helix" evidence="3">
    <location>
        <begin position="179"/>
        <end position="195"/>
    </location>
</feature>
<feature type="helix" evidence="3">
    <location>
        <begin position="199"/>
        <end position="204"/>
    </location>
</feature>
<feature type="helix" evidence="3">
    <location>
        <begin position="212"/>
        <end position="215"/>
    </location>
</feature>
<sequence length="528" mass="58649">MAHPPRLNDDKPVIWTVSVTRLFELFRDISLEFDHLANITPIQLGFEKAVTYIRKKLANERCDAIIAAGSNGAYLKSRLSVPVILIKPSGYDVLQALAKAGKLTSSIGVVTYQETIPALVAFQKTFNLRLDQRSYITEEDARGQINELKANGTEAVVGAGLITDLAEEAGMTGIFIYSAATVRQAFSDALDMTRMSLRHNTHDATRNALRTRYVLGDMLGQSPQMEQVRQTILLYARSSAAVLIEGETGTGKELAAQAIHREYFARHDARQGKKSHPFVAVNCGAIAESLLEAELFGYEEGAFTGSRRGGRAGLFEIAHGGTLFLDEIGEMPLPLQTRLLRVLEEKEVTRVGGHQPVPVDVRVISATHCNLEEDMQQGRFRRDLFYRLSILRLQLPPLRERVADILPLAESFLKVSLAALSAPFSAALRQGLQASETVLLHYDWPGNIRELRNMMERLALFLSVEPTPDLTPQFMQLLLPELARESAKTPAPRLLTPQQALEKFNGDKTAAANYLGISRTTFWRRLKS</sequence>
<gene>
    <name type="primary">prpR</name>
    <name type="synonym">yahP</name>
    <name type="ordered locus">b0330</name>
    <name type="ordered locus">JW0322</name>
</gene>